<gene>
    <name evidence="1" type="primary">rpsJ</name>
    <name type="ordered locus">ECSE_3596</name>
</gene>
<sequence>MQNQRIRIRLKAFDHRLIDQATAEIVETAKRTGAQVRGPIPLPTRKERFTVLISPHVNKDARDQYEIRTHLRLVDIVEPTEKTVDALMRLDLAAGVDVQISLG</sequence>
<keyword id="KW-0687">Ribonucleoprotein</keyword>
<keyword id="KW-0689">Ribosomal protein</keyword>
<feature type="chain" id="PRO_1000127122" description="Small ribosomal subunit protein uS10">
    <location>
        <begin position="1"/>
        <end position="103"/>
    </location>
</feature>
<accession>B6I235</accession>
<protein>
    <recommendedName>
        <fullName evidence="1">Small ribosomal subunit protein uS10</fullName>
    </recommendedName>
    <alternativeName>
        <fullName evidence="2">30S ribosomal protein S10</fullName>
    </alternativeName>
</protein>
<reference key="1">
    <citation type="journal article" date="2008" name="DNA Res.">
        <title>Complete genome sequence and comparative analysis of the wild-type commensal Escherichia coli strain SE11 isolated from a healthy adult.</title>
        <authorList>
            <person name="Oshima K."/>
            <person name="Toh H."/>
            <person name="Ogura Y."/>
            <person name="Sasamoto H."/>
            <person name="Morita H."/>
            <person name="Park S.-H."/>
            <person name="Ooka T."/>
            <person name="Iyoda S."/>
            <person name="Taylor T.D."/>
            <person name="Hayashi T."/>
            <person name="Itoh K."/>
            <person name="Hattori M."/>
        </authorList>
    </citation>
    <scope>NUCLEOTIDE SEQUENCE [LARGE SCALE GENOMIC DNA]</scope>
    <source>
        <strain>SE11</strain>
    </source>
</reference>
<comment type="function">
    <text evidence="1">Involved in the binding of tRNA to the ribosomes.</text>
</comment>
<comment type="subunit">
    <text evidence="1">Part of the 30S ribosomal subunit.</text>
</comment>
<comment type="similarity">
    <text evidence="1">Belongs to the universal ribosomal protein uS10 family.</text>
</comment>
<organism>
    <name type="scientific">Escherichia coli (strain SE11)</name>
    <dbReference type="NCBI Taxonomy" id="409438"/>
    <lineage>
        <taxon>Bacteria</taxon>
        <taxon>Pseudomonadati</taxon>
        <taxon>Pseudomonadota</taxon>
        <taxon>Gammaproteobacteria</taxon>
        <taxon>Enterobacterales</taxon>
        <taxon>Enterobacteriaceae</taxon>
        <taxon>Escherichia</taxon>
    </lineage>
</organism>
<name>RS10_ECOSE</name>
<dbReference type="EMBL" id="AP009240">
    <property type="protein sequence ID" value="BAG79120.1"/>
    <property type="molecule type" value="Genomic_DNA"/>
</dbReference>
<dbReference type="RefSeq" id="WP_001181004.1">
    <property type="nucleotide sequence ID" value="NC_011415.1"/>
</dbReference>
<dbReference type="SMR" id="B6I235"/>
<dbReference type="GeneID" id="93778666"/>
<dbReference type="KEGG" id="ecy:ECSE_3596"/>
<dbReference type="HOGENOM" id="CLU_122625_1_3_6"/>
<dbReference type="Proteomes" id="UP000008199">
    <property type="component" value="Chromosome"/>
</dbReference>
<dbReference type="GO" id="GO:1990904">
    <property type="term" value="C:ribonucleoprotein complex"/>
    <property type="evidence" value="ECO:0007669"/>
    <property type="project" value="UniProtKB-KW"/>
</dbReference>
<dbReference type="GO" id="GO:0005840">
    <property type="term" value="C:ribosome"/>
    <property type="evidence" value="ECO:0007669"/>
    <property type="project" value="UniProtKB-KW"/>
</dbReference>
<dbReference type="GO" id="GO:0003735">
    <property type="term" value="F:structural constituent of ribosome"/>
    <property type="evidence" value="ECO:0007669"/>
    <property type="project" value="InterPro"/>
</dbReference>
<dbReference type="GO" id="GO:0000049">
    <property type="term" value="F:tRNA binding"/>
    <property type="evidence" value="ECO:0007669"/>
    <property type="project" value="UniProtKB-UniRule"/>
</dbReference>
<dbReference type="GO" id="GO:0006412">
    <property type="term" value="P:translation"/>
    <property type="evidence" value="ECO:0007669"/>
    <property type="project" value="UniProtKB-UniRule"/>
</dbReference>
<dbReference type="FunFam" id="3.30.70.600:FF:000001">
    <property type="entry name" value="30S ribosomal protein S10"/>
    <property type="match status" value="1"/>
</dbReference>
<dbReference type="Gene3D" id="3.30.70.600">
    <property type="entry name" value="Ribosomal protein S10 domain"/>
    <property type="match status" value="1"/>
</dbReference>
<dbReference type="HAMAP" id="MF_00508">
    <property type="entry name" value="Ribosomal_uS10"/>
    <property type="match status" value="1"/>
</dbReference>
<dbReference type="InterPro" id="IPR001848">
    <property type="entry name" value="Ribosomal_uS10"/>
</dbReference>
<dbReference type="InterPro" id="IPR018268">
    <property type="entry name" value="Ribosomal_uS10_CS"/>
</dbReference>
<dbReference type="InterPro" id="IPR027486">
    <property type="entry name" value="Ribosomal_uS10_dom"/>
</dbReference>
<dbReference type="InterPro" id="IPR036838">
    <property type="entry name" value="Ribosomal_uS10_dom_sf"/>
</dbReference>
<dbReference type="NCBIfam" id="NF001861">
    <property type="entry name" value="PRK00596.1"/>
    <property type="match status" value="1"/>
</dbReference>
<dbReference type="NCBIfam" id="TIGR01049">
    <property type="entry name" value="rpsJ_bact"/>
    <property type="match status" value="1"/>
</dbReference>
<dbReference type="PANTHER" id="PTHR11700">
    <property type="entry name" value="30S RIBOSOMAL PROTEIN S10 FAMILY MEMBER"/>
    <property type="match status" value="1"/>
</dbReference>
<dbReference type="Pfam" id="PF00338">
    <property type="entry name" value="Ribosomal_S10"/>
    <property type="match status" value="1"/>
</dbReference>
<dbReference type="PRINTS" id="PR00971">
    <property type="entry name" value="RIBOSOMALS10"/>
</dbReference>
<dbReference type="SMART" id="SM01403">
    <property type="entry name" value="Ribosomal_S10"/>
    <property type="match status" value="1"/>
</dbReference>
<dbReference type="SUPFAM" id="SSF54999">
    <property type="entry name" value="Ribosomal protein S10"/>
    <property type="match status" value="1"/>
</dbReference>
<dbReference type="PROSITE" id="PS00361">
    <property type="entry name" value="RIBOSOMAL_S10"/>
    <property type="match status" value="1"/>
</dbReference>
<evidence type="ECO:0000255" key="1">
    <source>
        <dbReference type="HAMAP-Rule" id="MF_00508"/>
    </source>
</evidence>
<evidence type="ECO:0000305" key="2"/>
<proteinExistence type="inferred from homology"/>